<comment type="catalytic activity">
    <reaction evidence="1">
        <text>D-erythro-1-(imidazol-4-yl)glycerol 3-phosphate = 3-(imidazol-4-yl)-2-oxopropyl phosphate + H2O</text>
        <dbReference type="Rhea" id="RHEA:11040"/>
        <dbReference type="ChEBI" id="CHEBI:15377"/>
        <dbReference type="ChEBI" id="CHEBI:57766"/>
        <dbReference type="ChEBI" id="CHEBI:58278"/>
        <dbReference type="EC" id="4.2.1.19"/>
    </reaction>
</comment>
<comment type="pathway">
    <text evidence="1">Amino-acid biosynthesis; L-histidine biosynthesis; L-histidine from 5-phospho-alpha-D-ribose 1-diphosphate: step 6/9.</text>
</comment>
<comment type="subcellular location">
    <subcellularLocation>
        <location evidence="1">Cytoplasm</location>
    </subcellularLocation>
</comment>
<comment type="similarity">
    <text evidence="1">Belongs to the imidazoleglycerol-phosphate dehydratase family.</text>
</comment>
<evidence type="ECO:0000255" key="1">
    <source>
        <dbReference type="HAMAP-Rule" id="MF_00076"/>
    </source>
</evidence>
<reference key="1">
    <citation type="journal article" date="2003" name="Science">
        <title>Genome of Geobacter sulfurreducens: metal reduction in subsurface environments.</title>
        <authorList>
            <person name="Methe B.A."/>
            <person name="Nelson K.E."/>
            <person name="Eisen J.A."/>
            <person name="Paulsen I.T."/>
            <person name="Nelson W.C."/>
            <person name="Heidelberg J.F."/>
            <person name="Wu D."/>
            <person name="Wu M."/>
            <person name="Ward N.L."/>
            <person name="Beanan M.J."/>
            <person name="Dodson R.J."/>
            <person name="Madupu R."/>
            <person name="Brinkac L.M."/>
            <person name="Daugherty S.C."/>
            <person name="DeBoy R.T."/>
            <person name="Durkin A.S."/>
            <person name="Gwinn M.L."/>
            <person name="Kolonay J.F."/>
            <person name="Sullivan S.A."/>
            <person name="Haft D.H."/>
            <person name="Selengut J."/>
            <person name="Davidsen T.M."/>
            <person name="Zafar N."/>
            <person name="White O."/>
            <person name="Tran B."/>
            <person name="Romero C."/>
            <person name="Forberger H.A."/>
            <person name="Weidman J.F."/>
            <person name="Khouri H.M."/>
            <person name="Feldblyum T.V."/>
            <person name="Utterback T.R."/>
            <person name="Van Aken S.E."/>
            <person name="Lovley D.R."/>
            <person name="Fraser C.M."/>
        </authorList>
    </citation>
    <scope>NUCLEOTIDE SEQUENCE [LARGE SCALE GENOMIC DNA]</scope>
    <source>
        <strain>ATCC 51573 / DSM 12127 / PCA</strain>
    </source>
</reference>
<accession>P60885</accession>
<gene>
    <name evidence="1" type="primary">hisB</name>
    <name type="ordered locus">GSU3098</name>
</gene>
<name>HIS7_GEOSL</name>
<sequence>MSRKATIERVTKETQIKLSLEIDGTGEAKICTSVPFLDHMLDLFARHGLFNLQVDATGDIDIDFHHTVEDIGIVLGQALKEALGDKKGIRRYGQATVPMDETLASVAVDISGRPYLVYHVSLPKVKIGEFDVELVREFFQAVVNNLGANIHVNVMYGDNVHHIVEACFKAFARAVDQATQVDSRIQGVMSTKGKL</sequence>
<feature type="chain" id="PRO_0000158131" description="Imidazoleglycerol-phosphate dehydratase">
    <location>
        <begin position="1"/>
        <end position="195"/>
    </location>
</feature>
<keyword id="KW-0028">Amino-acid biosynthesis</keyword>
<keyword id="KW-0963">Cytoplasm</keyword>
<keyword id="KW-0368">Histidine biosynthesis</keyword>
<keyword id="KW-0456">Lyase</keyword>
<keyword id="KW-1185">Reference proteome</keyword>
<organism>
    <name type="scientific">Geobacter sulfurreducens (strain ATCC 51573 / DSM 12127 / PCA)</name>
    <dbReference type="NCBI Taxonomy" id="243231"/>
    <lineage>
        <taxon>Bacteria</taxon>
        <taxon>Pseudomonadati</taxon>
        <taxon>Thermodesulfobacteriota</taxon>
        <taxon>Desulfuromonadia</taxon>
        <taxon>Geobacterales</taxon>
        <taxon>Geobacteraceae</taxon>
        <taxon>Geobacter</taxon>
    </lineage>
</organism>
<dbReference type="EC" id="4.2.1.19" evidence="1"/>
<dbReference type="EMBL" id="AE017180">
    <property type="protein sequence ID" value="AAR36489.1"/>
    <property type="molecule type" value="Genomic_DNA"/>
</dbReference>
<dbReference type="RefSeq" id="NP_954139.1">
    <property type="nucleotide sequence ID" value="NC_002939.5"/>
</dbReference>
<dbReference type="RefSeq" id="WP_010943719.1">
    <property type="nucleotide sequence ID" value="NC_002939.5"/>
</dbReference>
<dbReference type="SMR" id="P60885"/>
<dbReference type="FunCoup" id="P60885">
    <property type="interactions" value="385"/>
</dbReference>
<dbReference type="STRING" id="243231.GSU3098"/>
<dbReference type="EnsemblBacteria" id="AAR36489">
    <property type="protein sequence ID" value="AAR36489"/>
    <property type="gene ID" value="GSU3098"/>
</dbReference>
<dbReference type="KEGG" id="gsu:GSU3098"/>
<dbReference type="PATRIC" id="fig|243231.5.peg.3122"/>
<dbReference type="eggNOG" id="COG0131">
    <property type="taxonomic scope" value="Bacteria"/>
</dbReference>
<dbReference type="HOGENOM" id="CLU_044308_2_0_7"/>
<dbReference type="InParanoid" id="P60885"/>
<dbReference type="OrthoDB" id="9790411at2"/>
<dbReference type="UniPathway" id="UPA00031">
    <property type="reaction ID" value="UER00011"/>
</dbReference>
<dbReference type="Proteomes" id="UP000000577">
    <property type="component" value="Chromosome"/>
</dbReference>
<dbReference type="GO" id="GO:0005737">
    <property type="term" value="C:cytoplasm"/>
    <property type="evidence" value="ECO:0007669"/>
    <property type="project" value="UniProtKB-SubCell"/>
</dbReference>
<dbReference type="GO" id="GO:0004424">
    <property type="term" value="F:imidazoleglycerol-phosphate dehydratase activity"/>
    <property type="evidence" value="ECO:0000318"/>
    <property type="project" value="GO_Central"/>
</dbReference>
<dbReference type="GO" id="GO:0000105">
    <property type="term" value="P:L-histidine biosynthetic process"/>
    <property type="evidence" value="ECO:0000318"/>
    <property type="project" value="GO_Central"/>
</dbReference>
<dbReference type="CDD" id="cd07914">
    <property type="entry name" value="IGPD"/>
    <property type="match status" value="1"/>
</dbReference>
<dbReference type="FunFam" id="3.30.230.40:FF:000001">
    <property type="entry name" value="Imidazoleglycerol-phosphate dehydratase HisB"/>
    <property type="match status" value="1"/>
</dbReference>
<dbReference type="FunFam" id="3.30.230.40:FF:000003">
    <property type="entry name" value="Imidazoleglycerol-phosphate dehydratase HisB"/>
    <property type="match status" value="1"/>
</dbReference>
<dbReference type="Gene3D" id="3.30.230.40">
    <property type="entry name" value="Imidazole glycerol phosphate dehydratase, domain 1"/>
    <property type="match status" value="2"/>
</dbReference>
<dbReference type="HAMAP" id="MF_00076">
    <property type="entry name" value="HisB"/>
    <property type="match status" value="1"/>
</dbReference>
<dbReference type="InterPro" id="IPR038494">
    <property type="entry name" value="IGPD_sf"/>
</dbReference>
<dbReference type="InterPro" id="IPR000807">
    <property type="entry name" value="ImidazoleglycerolP_deHydtase"/>
</dbReference>
<dbReference type="InterPro" id="IPR020565">
    <property type="entry name" value="ImidazoleglycerP_deHydtase_CS"/>
</dbReference>
<dbReference type="InterPro" id="IPR020568">
    <property type="entry name" value="Ribosomal_Su5_D2-typ_SF"/>
</dbReference>
<dbReference type="NCBIfam" id="NF002107">
    <property type="entry name" value="PRK00951.1-2"/>
    <property type="match status" value="1"/>
</dbReference>
<dbReference type="NCBIfam" id="NF002109">
    <property type="entry name" value="PRK00951.1-5"/>
    <property type="match status" value="1"/>
</dbReference>
<dbReference type="NCBIfam" id="NF002111">
    <property type="entry name" value="PRK00951.2-1"/>
    <property type="match status" value="1"/>
</dbReference>
<dbReference type="NCBIfam" id="NF002114">
    <property type="entry name" value="PRK00951.2-4"/>
    <property type="match status" value="1"/>
</dbReference>
<dbReference type="NCBIfam" id="NF002115">
    <property type="entry name" value="PRK00951.2-5"/>
    <property type="match status" value="1"/>
</dbReference>
<dbReference type="PANTHER" id="PTHR23133:SF2">
    <property type="entry name" value="IMIDAZOLEGLYCEROL-PHOSPHATE DEHYDRATASE"/>
    <property type="match status" value="1"/>
</dbReference>
<dbReference type="PANTHER" id="PTHR23133">
    <property type="entry name" value="IMIDAZOLEGLYCEROL-PHOSPHATE DEHYDRATASE HIS7"/>
    <property type="match status" value="1"/>
</dbReference>
<dbReference type="Pfam" id="PF00475">
    <property type="entry name" value="IGPD"/>
    <property type="match status" value="1"/>
</dbReference>
<dbReference type="SUPFAM" id="SSF54211">
    <property type="entry name" value="Ribosomal protein S5 domain 2-like"/>
    <property type="match status" value="2"/>
</dbReference>
<dbReference type="PROSITE" id="PS00954">
    <property type="entry name" value="IGP_DEHYDRATASE_1"/>
    <property type="match status" value="1"/>
</dbReference>
<dbReference type="PROSITE" id="PS00955">
    <property type="entry name" value="IGP_DEHYDRATASE_2"/>
    <property type="match status" value="1"/>
</dbReference>
<proteinExistence type="inferred from homology"/>
<protein>
    <recommendedName>
        <fullName evidence="1">Imidazoleglycerol-phosphate dehydratase</fullName>
        <shortName evidence="1">IGPD</shortName>
        <ecNumber evidence="1">4.2.1.19</ecNumber>
    </recommendedName>
</protein>